<feature type="chain" id="PRO_0000107517" description="Uncharacterized protein MJECL33">
    <location>
        <begin position="1"/>
        <end position="408"/>
    </location>
</feature>
<reference key="1">
    <citation type="journal article" date="1996" name="Science">
        <title>Complete genome sequence of the methanogenic archaeon, Methanococcus jannaschii.</title>
        <authorList>
            <person name="Bult C.J."/>
            <person name="White O."/>
            <person name="Olsen G.J."/>
            <person name="Zhou L."/>
            <person name="Fleischmann R.D."/>
            <person name="Sutton G.G."/>
            <person name="Blake J.A."/>
            <person name="FitzGerald L.M."/>
            <person name="Clayton R.A."/>
            <person name="Gocayne J.D."/>
            <person name="Kerlavage A.R."/>
            <person name="Dougherty B.A."/>
            <person name="Tomb J.-F."/>
            <person name="Adams M.D."/>
            <person name="Reich C.I."/>
            <person name="Overbeek R."/>
            <person name="Kirkness E.F."/>
            <person name="Weinstock K.G."/>
            <person name="Merrick J.M."/>
            <person name="Glodek A."/>
            <person name="Scott J.L."/>
            <person name="Geoghagen N.S.M."/>
            <person name="Weidman J.F."/>
            <person name="Fuhrmann J.L."/>
            <person name="Nguyen D."/>
            <person name="Utterback T.R."/>
            <person name="Kelley J.M."/>
            <person name="Peterson J.D."/>
            <person name="Sadow P.W."/>
            <person name="Hanna M.C."/>
            <person name="Cotton M.D."/>
            <person name="Roberts K.M."/>
            <person name="Hurst M.A."/>
            <person name="Kaine B.P."/>
            <person name="Borodovsky M."/>
            <person name="Klenk H.-P."/>
            <person name="Fraser C.M."/>
            <person name="Smith H.O."/>
            <person name="Woese C.R."/>
            <person name="Venter J.C."/>
        </authorList>
    </citation>
    <scope>NUCLEOTIDE SEQUENCE [LARGE SCALE GENOMIC DNA]</scope>
    <source>
        <strain>ATCC 43067 / DSM 2661 / JAL-1 / JCM 10045 / NBRC 100440</strain>
    </source>
</reference>
<organism>
    <name type="scientific">Methanocaldococcus jannaschii (strain ATCC 43067 / DSM 2661 / JAL-1 / JCM 10045 / NBRC 100440)</name>
    <name type="common">Methanococcus jannaschii</name>
    <dbReference type="NCBI Taxonomy" id="243232"/>
    <lineage>
        <taxon>Archaea</taxon>
        <taxon>Methanobacteriati</taxon>
        <taxon>Methanobacteriota</taxon>
        <taxon>Methanomada group</taxon>
        <taxon>Methanococci</taxon>
        <taxon>Methanococcales</taxon>
        <taxon>Methanocaldococcaceae</taxon>
        <taxon>Methanocaldococcus</taxon>
    </lineage>
</organism>
<dbReference type="EMBL" id="L77118">
    <property type="protein sequence ID" value="AAC37102.1"/>
    <property type="molecule type" value="Genomic_DNA"/>
</dbReference>
<dbReference type="PIR" id="H64513">
    <property type="entry name" value="H64513"/>
</dbReference>
<dbReference type="PaxDb" id="243232-MJ_ECL33"/>
<dbReference type="EnsemblBacteria" id="AAC37102">
    <property type="protein sequence ID" value="AAC37102"/>
    <property type="gene ID" value="MJ_ECL33"/>
</dbReference>
<dbReference type="KEGG" id="mja:MJ_ECL33"/>
<dbReference type="eggNOG" id="arCOG06586">
    <property type="taxonomic scope" value="Archaea"/>
</dbReference>
<dbReference type="HOGENOM" id="CLU_712940_0_0_2"/>
<dbReference type="InParanoid" id="Q60290"/>
<dbReference type="Proteomes" id="UP000000805">
    <property type="component" value="Plasmid pDSM2661_1"/>
</dbReference>
<protein>
    <recommendedName>
        <fullName>Uncharacterized protein MJECL33</fullName>
    </recommendedName>
</protein>
<accession>Q60290</accession>
<proteinExistence type="predicted"/>
<geneLocation type="plasmid">
    <name>large ECE</name>
</geneLocation>
<name>Y3533_METJA</name>
<sequence length="408" mass="48364">MIIMDTIFVGSAIPDITNRPQLYEWLERNMERSYKDILDDTKLEPEQNVVKTYILESNIHPKKLSRIIKTGKIKPLDEYEFYMLRIGDEGYFFIDAKNPRFWKLYTLQKSEESDKYFNKLISPIKSRLDNLWMPTGDLEKFLKKADYVRGLSTKHDETPFYLDNDVEERANKLSISSNGESVYELIKIIQSLSSDEIQEFEKLIKDFQLLNDTKIKKIFNTIKKLHEFKHLMRITKSKIKIVSEDDKDKFVLEDIYYWGKFTVKGTSIEKHNEIVDKTIENYEQKIEIIEDSLIDYTSSDWGDRIPLIYEFEKEIEDLKNFVEGLISVKEPFKIWGLAKQVEEDMYYISGVDLHNGDRFSLEVTPWWMRLYLPKGSCGNTALRLLSNIQQTYDSETILEVEKYGERIR</sequence>
<keyword id="KW-0614">Plasmid</keyword>
<keyword id="KW-1185">Reference proteome</keyword>
<gene>
    <name type="ordered locus">MJECL33</name>
</gene>